<reference key="1">
    <citation type="journal article" date="2002" name="Nature">
        <title>Comparison of the genomes of two Xanthomonas pathogens with differing host specificities.</title>
        <authorList>
            <person name="da Silva A.C.R."/>
            <person name="Ferro J.A."/>
            <person name="Reinach F.C."/>
            <person name="Farah C.S."/>
            <person name="Furlan L.R."/>
            <person name="Quaggio R.B."/>
            <person name="Monteiro-Vitorello C.B."/>
            <person name="Van Sluys M.A."/>
            <person name="Almeida N.F. Jr."/>
            <person name="Alves L.M.C."/>
            <person name="do Amaral A.M."/>
            <person name="Bertolini M.C."/>
            <person name="Camargo L.E.A."/>
            <person name="Camarotte G."/>
            <person name="Cannavan F."/>
            <person name="Cardozo J."/>
            <person name="Chambergo F."/>
            <person name="Ciapina L.P."/>
            <person name="Cicarelli R.M.B."/>
            <person name="Coutinho L.L."/>
            <person name="Cursino-Santos J.R."/>
            <person name="El-Dorry H."/>
            <person name="Faria J.B."/>
            <person name="Ferreira A.J.S."/>
            <person name="Ferreira R.C.C."/>
            <person name="Ferro M.I.T."/>
            <person name="Formighieri E.F."/>
            <person name="Franco M.C."/>
            <person name="Greggio C.C."/>
            <person name="Gruber A."/>
            <person name="Katsuyama A.M."/>
            <person name="Kishi L.T."/>
            <person name="Leite R.P."/>
            <person name="Lemos E.G.M."/>
            <person name="Lemos M.V.F."/>
            <person name="Locali E.C."/>
            <person name="Machado M.A."/>
            <person name="Madeira A.M.B.N."/>
            <person name="Martinez-Rossi N.M."/>
            <person name="Martins E.C."/>
            <person name="Meidanis J."/>
            <person name="Menck C.F.M."/>
            <person name="Miyaki C.Y."/>
            <person name="Moon D.H."/>
            <person name="Moreira L.M."/>
            <person name="Novo M.T.M."/>
            <person name="Okura V.K."/>
            <person name="Oliveira M.C."/>
            <person name="Oliveira V.R."/>
            <person name="Pereira H.A."/>
            <person name="Rossi A."/>
            <person name="Sena J.A.D."/>
            <person name="Silva C."/>
            <person name="de Souza R.F."/>
            <person name="Spinola L.A.F."/>
            <person name="Takita M.A."/>
            <person name="Tamura R.E."/>
            <person name="Teixeira E.C."/>
            <person name="Tezza R.I.D."/>
            <person name="Trindade dos Santos M."/>
            <person name="Truffi D."/>
            <person name="Tsai S.M."/>
            <person name="White F.F."/>
            <person name="Setubal J.C."/>
            <person name="Kitajima J.P."/>
        </authorList>
    </citation>
    <scope>NUCLEOTIDE SEQUENCE [LARGE SCALE GENOMIC DNA]</scope>
    <source>
        <strain>ATCC 33913 / DSM 3586 / NCPPB 528 / LMG 568 / P 25</strain>
    </source>
</reference>
<accession>Q8PAU0</accession>
<name>DAPE_XANCP</name>
<gene>
    <name evidence="1" type="primary">dapE</name>
    <name type="ordered locus">XCC1387</name>
</gene>
<proteinExistence type="inferred from homology"/>
<keyword id="KW-0028">Amino-acid biosynthesis</keyword>
<keyword id="KW-0170">Cobalt</keyword>
<keyword id="KW-0220">Diaminopimelate biosynthesis</keyword>
<keyword id="KW-0378">Hydrolase</keyword>
<keyword id="KW-0457">Lysine biosynthesis</keyword>
<keyword id="KW-0479">Metal-binding</keyword>
<keyword id="KW-1185">Reference proteome</keyword>
<keyword id="KW-0862">Zinc</keyword>
<evidence type="ECO:0000255" key="1">
    <source>
        <dbReference type="HAMAP-Rule" id="MF_01690"/>
    </source>
</evidence>
<evidence type="ECO:0000305" key="2"/>
<organism>
    <name type="scientific">Xanthomonas campestris pv. campestris (strain ATCC 33913 / DSM 3586 / NCPPB 528 / LMG 568 / P 25)</name>
    <dbReference type="NCBI Taxonomy" id="190485"/>
    <lineage>
        <taxon>Bacteria</taxon>
        <taxon>Pseudomonadati</taxon>
        <taxon>Pseudomonadota</taxon>
        <taxon>Gammaproteobacteria</taxon>
        <taxon>Lysobacterales</taxon>
        <taxon>Lysobacteraceae</taxon>
        <taxon>Xanthomonas</taxon>
    </lineage>
</organism>
<sequence>MTSDVLQLTCDLIARASVTPADAGCQALIADRLSAAGFACEHLRLGAVDNLWATHGSGAPVLVLLGHTDVVPPGPASDWASDPFAPQVRDGVLYGRGAADMKGSVAAFVVAAEQFVAAHPEHPGTLAVLLTSDEEGDAIDGVRHVARLFAERGQQIDWCITGEPSSTERLGDLLRVGRRGSLSGNLIVKGVQGHVAYPHKARNPIHLAAPALAELIARQWDDGFESFPPTSLQISNIHAGTGANNVIPGELQVAFNLRYTPHWNAETLEREIVALLERHALTYTLAWHRSGEPFYTPEGTLRRVAREVLGAFVGAPPEESTGGGTSDARFIAPLGAQCIEVGPVNASIHQVDEHVRVADLEALPALYRTLVERLLV</sequence>
<dbReference type="EC" id="3.5.1.18" evidence="1"/>
<dbReference type="EMBL" id="AE008922">
    <property type="protein sequence ID" value="AAM40685.1"/>
    <property type="status" value="ALT_INIT"/>
    <property type="molecule type" value="Genomic_DNA"/>
</dbReference>
<dbReference type="RefSeq" id="NP_636761.1">
    <property type="nucleotide sequence ID" value="NC_003902.1"/>
</dbReference>
<dbReference type="RefSeq" id="WP_040941552.1">
    <property type="nucleotide sequence ID" value="NC_003902.1"/>
</dbReference>
<dbReference type="SMR" id="Q8PAU0"/>
<dbReference type="STRING" id="190485.XCC1387"/>
<dbReference type="EnsemblBacteria" id="AAM40685">
    <property type="protein sequence ID" value="AAM40685"/>
    <property type="gene ID" value="XCC1387"/>
</dbReference>
<dbReference type="KEGG" id="xcc:XCC1387"/>
<dbReference type="PATRIC" id="fig|190485.4.peg.1490"/>
<dbReference type="eggNOG" id="COG0624">
    <property type="taxonomic scope" value="Bacteria"/>
</dbReference>
<dbReference type="HOGENOM" id="CLU_021802_4_0_6"/>
<dbReference type="OrthoDB" id="9809784at2"/>
<dbReference type="UniPathway" id="UPA00034">
    <property type="reaction ID" value="UER00021"/>
</dbReference>
<dbReference type="Proteomes" id="UP000001010">
    <property type="component" value="Chromosome"/>
</dbReference>
<dbReference type="GO" id="GO:0005829">
    <property type="term" value="C:cytosol"/>
    <property type="evidence" value="ECO:0000318"/>
    <property type="project" value="GO_Central"/>
</dbReference>
<dbReference type="GO" id="GO:0050897">
    <property type="term" value="F:cobalt ion binding"/>
    <property type="evidence" value="ECO:0007669"/>
    <property type="project" value="UniProtKB-UniRule"/>
</dbReference>
<dbReference type="GO" id="GO:0009014">
    <property type="term" value="F:succinyl-diaminopimelate desuccinylase activity"/>
    <property type="evidence" value="ECO:0000318"/>
    <property type="project" value="GO_Central"/>
</dbReference>
<dbReference type="GO" id="GO:0008270">
    <property type="term" value="F:zinc ion binding"/>
    <property type="evidence" value="ECO:0007669"/>
    <property type="project" value="UniProtKB-UniRule"/>
</dbReference>
<dbReference type="GO" id="GO:0019877">
    <property type="term" value="P:diaminopimelate biosynthetic process"/>
    <property type="evidence" value="ECO:0007669"/>
    <property type="project" value="UniProtKB-UniRule"/>
</dbReference>
<dbReference type="GO" id="GO:0009089">
    <property type="term" value="P:lysine biosynthetic process via diaminopimelate"/>
    <property type="evidence" value="ECO:0000318"/>
    <property type="project" value="GO_Central"/>
</dbReference>
<dbReference type="CDD" id="cd03891">
    <property type="entry name" value="M20_DapE_proteobac"/>
    <property type="match status" value="1"/>
</dbReference>
<dbReference type="FunFam" id="3.40.630.10:FF:000005">
    <property type="entry name" value="Succinyl-diaminopimelate desuccinylase"/>
    <property type="match status" value="1"/>
</dbReference>
<dbReference type="Gene3D" id="3.40.630.10">
    <property type="entry name" value="Zn peptidases"/>
    <property type="match status" value="2"/>
</dbReference>
<dbReference type="HAMAP" id="MF_01690">
    <property type="entry name" value="DapE"/>
    <property type="match status" value="1"/>
</dbReference>
<dbReference type="InterPro" id="IPR001261">
    <property type="entry name" value="ArgE/DapE_CS"/>
</dbReference>
<dbReference type="InterPro" id="IPR036264">
    <property type="entry name" value="Bact_exopeptidase_dim_dom"/>
</dbReference>
<dbReference type="InterPro" id="IPR005941">
    <property type="entry name" value="DapE_proteobac"/>
</dbReference>
<dbReference type="InterPro" id="IPR002933">
    <property type="entry name" value="Peptidase_M20"/>
</dbReference>
<dbReference type="InterPro" id="IPR011650">
    <property type="entry name" value="Peptidase_M20_dimer"/>
</dbReference>
<dbReference type="InterPro" id="IPR050072">
    <property type="entry name" value="Peptidase_M20A"/>
</dbReference>
<dbReference type="NCBIfam" id="TIGR01246">
    <property type="entry name" value="dapE_proteo"/>
    <property type="match status" value="1"/>
</dbReference>
<dbReference type="NCBIfam" id="NF009557">
    <property type="entry name" value="PRK13009.1"/>
    <property type="match status" value="1"/>
</dbReference>
<dbReference type="PANTHER" id="PTHR43808">
    <property type="entry name" value="ACETYLORNITHINE DEACETYLASE"/>
    <property type="match status" value="1"/>
</dbReference>
<dbReference type="PANTHER" id="PTHR43808:SF31">
    <property type="entry name" value="N-ACETYL-L-CITRULLINE DEACETYLASE"/>
    <property type="match status" value="1"/>
</dbReference>
<dbReference type="Pfam" id="PF07687">
    <property type="entry name" value="M20_dimer"/>
    <property type="match status" value="1"/>
</dbReference>
<dbReference type="Pfam" id="PF01546">
    <property type="entry name" value="Peptidase_M20"/>
    <property type="match status" value="1"/>
</dbReference>
<dbReference type="SUPFAM" id="SSF55031">
    <property type="entry name" value="Bacterial exopeptidase dimerisation domain"/>
    <property type="match status" value="1"/>
</dbReference>
<dbReference type="SUPFAM" id="SSF53187">
    <property type="entry name" value="Zn-dependent exopeptidases"/>
    <property type="match status" value="1"/>
</dbReference>
<dbReference type="PROSITE" id="PS00759">
    <property type="entry name" value="ARGE_DAPE_CPG2_2"/>
    <property type="match status" value="1"/>
</dbReference>
<comment type="function">
    <text evidence="1">Catalyzes the hydrolysis of N-succinyl-L,L-diaminopimelic acid (SDAP), forming succinate and LL-2,6-diaminopimelate (DAP), an intermediate involved in the bacterial biosynthesis of lysine and meso-diaminopimelic acid, an essential component of bacterial cell walls.</text>
</comment>
<comment type="catalytic activity">
    <reaction evidence="1">
        <text>N-succinyl-(2S,6S)-2,6-diaminopimelate + H2O = (2S,6S)-2,6-diaminopimelate + succinate</text>
        <dbReference type="Rhea" id="RHEA:22608"/>
        <dbReference type="ChEBI" id="CHEBI:15377"/>
        <dbReference type="ChEBI" id="CHEBI:30031"/>
        <dbReference type="ChEBI" id="CHEBI:57609"/>
        <dbReference type="ChEBI" id="CHEBI:58087"/>
        <dbReference type="EC" id="3.5.1.18"/>
    </reaction>
</comment>
<comment type="cofactor">
    <cofactor evidence="1">
        <name>Zn(2+)</name>
        <dbReference type="ChEBI" id="CHEBI:29105"/>
    </cofactor>
    <cofactor evidence="1">
        <name>Co(2+)</name>
        <dbReference type="ChEBI" id="CHEBI:48828"/>
    </cofactor>
    <text evidence="1">Binds 2 Zn(2+) or Co(2+) ions per subunit.</text>
</comment>
<comment type="pathway">
    <text evidence="1">Amino-acid biosynthesis; L-lysine biosynthesis via DAP pathway; LL-2,6-diaminopimelate from (S)-tetrahydrodipicolinate (succinylase route): step 3/3.</text>
</comment>
<comment type="subunit">
    <text evidence="1">Homodimer.</text>
</comment>
<comment type="similarity">
    <text evidence="1">Belongs to the peptidase M20A family. DapE subfamily.</text>
</comment>
<comment type="sequence caution" evidence="2">
    <conflict type="erroneous initiation">
        <sequence resource="EMBL-CDS" id="AAM40685"/>
    </conflict>
</comment>
<protein>
    <recommendedName>
        <fullName evidence="1">Succinyl-diaminopimelate desuccinylase</fullName>
        <shortName evidence="1">SDAP desuccinylase</shortName>
        <ecNumber evidence="1">3.5.1.18</ecNumber>
    </recommendedName>
    <alternativeName>
        <fullName evidence="1">N-succinyl-LL-2,6-diaminoheptanedioate amidohydrolase</fullName>
    </alternativeName>
</protein>
<feature type="chain" id="PRO_0000375782" description="Succinyl-diaminopimelate desuccinylase">
    <location>
        <begin position="1"/>
        <end position="376"/>
    </location>
</feature>
<feature type="active site" evidence="1">
    <location>
        <position position="69"/>
    </location>
</feature>
<feature type="active site" description="Proton acceptor" evidence="1">
    <location>
        <position position="134"/>
    </location>
</feature>
<feature type="binding site" evidence="1">
    <location>
        <position position="67"/>
    </location>
    <ligand>
        <name>Zn(2+)</name>
        <dbReference type="ChEBI" id="CHEBI:29105"/>
        <label>1</label>
    </ligand>
</feature>
<feature type="binding site" evidence="1">
    <location>
        <position position="100"/>
    </location>
    <ligand>
        <name>Zn(2+)</name>
        <dbReference type="ChEBI" id="CHEBI:29105"/>
        <label>1</label>
    </ligand>
</feature>
<feature type="binding site" evidence="1">
    <location>
        <position position="100"/>
    </location>
    <ligand>
        <name>Zn(2+)</name>
        <dbReference type="ChEBI" id="CHEBI:29105"/>
        <label>2</label>
    </ligand>
</feature>
<feature type="binding site" evidence="1">
    <location>
        <position position="135"/>
    </location>
    <ligand>
        <name>Zn(2+)</name>
        <dbReference type="ChEBI" id="CHEBI:29105"/>
        <label>2</label>
    </ligand>
</feature>
<feature type="binding site" evidence="1">
    <location>
        <position position="163"/>
    </location>
    <ligand>
        <name>Zn(2+)</name>
        <dbReference type="ChEBI" id="CHEBI:29105"/>
        <label>1</label>
    </ligand>
</feature>
<feature type="binding site" evidence="1">
    <location>
        <position position="349"/>
    </location>
    <ligand>
        <name>Zn(2+)</name>
        <dbReference type="ChEBI" id="CHEBI:29105"/>
        <label>2</label>
    </ligand>
</feature>